<feature type="chain" id="PRO_0000312921" description="Protein fuzzy homolog">
    <location>
        <begin position="1"/>
        <end position="415"/>
    </location>
</feature>
<feature type="splice variant" id="VSP_029967" description="In isoform 2." evidence="7 8">
    <original>ETLSG</original>
    <variation>VLGQL</variation>
    <location>
        <begin position="165"/>
        <end position="169"/>
    </location>
</feature>
<feature type="splice variant" id="VSP_029968" description="In isoform 2." evidence="7 8">
    <location>
        <begin position="170"/>
        <end position="415"/>
    </location>
</feature>
<feature type="sequence conflict" description="In Ref. 1; BAE22226." evidence="9" ref="1">
    <original>M</original>
    <variation>I</variation>
    <location>
        <position position="101"/>
    </location>
</feature>
<feature type="strand" evidence="12">
    <location>
        <begin position="9"/>
        <end position="16"/>
    </location>
</feature>
<feature type="turn" evidence="12">
    <location>
        <begin position="17"/>
        <end position="19"/>
    </location>
</feature>
<feature type="strand" evidence="12">
    <location>
        <begin position="22"/>
        <end position="29"/>
    </location>
</feature>
<feature type="strand" evidence="12">
    <location>
        <begin position="32"/>
        <end position="34"/>
    </location>
</feature>
<feature type="helix" evidence="12">
    <location>
        <begin position="40"/>
        <end position="54"/>
    </location>
</feature>
<feature type="strand" evidence="12">
    <location>
        <begin position="59"/>
        <end position="67"/>
    </location>
</feature>
<feature type="strand" evidence="12">
    <location>
        <begin position="69"/>
        <end position="75"/>
    </location>
</feature>
<feature type="turn" evidence="12">
    <location>
        <begin position="76"/>
        <end position="78"/>
    </location>
</feature>
<feature type="strand" evidence="12">
    <location>
        <begin position="79"/>
        <end position="85"/>
    </location>
</feature>
<feature type="helix" evidence="12">
    <location>
        <begin position="92"/>
        <end position="110"/>
    </location>
</feature>
<feature type="helix" evidence="12">
    <location>
        <begin position="112"/>
        <end position="115"/>
    </location>
</feature>
<feature type="helix" evidence="12">
    <location>
        <begin position="121"/>
        <end position="127"/>
    </location>
</feature>
<feature type="helix" evidence="12">
    <location>
        <begin position="128"/>
        <end position="131"/>
    </location>
</feature>
<feature type="helix" evidence="12">
    <location>
        <begin position="132"/>
        <end position="139"/>
    </location>
</feature>
<feature type="helix" evidence="12">
    <location>
        <begin position="146"/>
        <end position="149"/>
    </location>
</feature>
<feature type="strand" evidence="12">
    <location>
        <begin position="151"/>
        <end position="154"/>
    </location>
</feature>
<feature type="helix" evidence="12">
    <location>
        <begin position="162"/>
        <end position="174"/>
    </location>
</feature>
<feature type="strand" evidence="12">
    <location>
        <begin position="179"/>
        <end position="183"/>
    </location>
</feature>
<feature type="strand" evidence="12">
    <location>
        <begin position="186"/>
        <end position="190"/>
    </location>
</feature>
<feature type="helix" evidence="12">
    <location>
        <begin position="192"/>
        <end position="195"/>
    </location>
</feature>
<feature type="helix" evidence="12">
    <location>
        <begin position="199"/>
        <end position="202"/>
    </location>
</feature>
<feature type="helix" evidence="12">
    <location>
        <begin position="204"/>
        <end position="211"/>
    </location>
</feature>
<feature type="strand" evidence="12">
    <location>
        <begin position="216"/>
        <end position="223"/>
    </location>
</feature>
<feature type="strand" evidence="12">
    <location>
        <begin position="225"/>
        <end position="227"/>
    </location>
</feature>
<feature type="strand" evidence="12">
    <location>
        <begin position="231"/>
        <end position="241"/>
    </location>
</feature>
<feature type="strand" evidence="12">
    <location>
        <begin position="244"/>
        <end position="252"/>
    </location>
</feature>
<feature type="helix" evidence="12">
    <location>
        <begin position="256"/>
        <end position="258"/>
    </location>
</feature>
<feature type="helix" evidence="12">
    <location>
        <begin position="261"/>
        <end position="268"/>
    </location>
</feature>
<feature type="helix" evidence="12">
    <location>
        <begin position="269"/>
        <end position="271"/>
    </location>
</feature>
<feature type="helix" evidence="12">
    <location>
        <begin position="272"/>
        <end position="281"/>
    </location>
</feature>
<feature type="strand" evidence="12">
    <location>
        <begin position="296"/>
        <end position="303"/>
    </location>
</feature>
<feature type="turn" evidence="12">
    <location>
        <begin position="304"/>
        <end position="307"/>
    </location>
</feature>
<feature type="strand" evidence="12">
    <location>
        <begin position="308"/>
        <end position="313"/>
    </location>
</feature>
<feature type="strand" evidence="12">
    <location>
        <begin position="319"/>
        <end position="321"/>
    </location>
</feature>
<feature type="helix" evidence="12">
    <location>
        <begin position="323"/>
        <end position="337"/>
    </location>
</feature>
<feature type="turn" evidence="12">
    <location>
        <begin position="338"/>
        <end position="341"/>
    </location>
</feature>
<feature type="strand" evidence="12">
    <location>
        <begin position="361"/>
        <end position="369"/>
    </location>
</feature>
<feature type="turn" evidence="12">
    <location>
        <begin position="370"/>
        <end position="373"/>
    </location>
</feature>
<feature type="strand" evidence="12">
    <location>
        <begin position="376"/>
        <end position="382"/>
    </location>
</feature>
<feature type="strand" evidence="12">
    <location>
        <begin position="385"/>
        <end position="391"/>
    </location>
</feature>
<feature type="helix" evidence="12">
    <location>
        <begin position="397"/>
        <end position="399"/>
    </location>
</feature>
<feature type="helix" evidence="12">
    <location>
        <begin position="400"/>
        <end position="411"/>
    </location>
</feature>
<feature type="turn" evidence="12">
    <location>
        <begin position="412"/>
        <end position="414"/>
    </location>
</feature>
<sequence length="415" mass="45588">MGDEGPGSPVHLLCLAASSGVPLFCRSSSGGAPSRQQLPFSVIGSLNGVHMFGQNLDVQLNSARTEDTTVVWKNFHDSITLIVLSSEEGTSELRLERMLHMVFGAMVLIVGLEELTNIRNVERLKKELRASYCLIDSFLGNSELIGDLTQCVDCVIPPEGSAMQETLSGFAEATGTAFVSLLVSGRVVAATEGWWRLGMPEAVLLPWLVGSLPPQAARDYPVYLPHGSPTVPHRLLTLTLLRGLELCLLCGPRPPLGQLDPQLMERWWQPLLEPLRACLPLGPRALPEGFPLHSDILGLLLLHLELRRCLFTMEPSKDKEPSPEQRRRLLRNFYTLVATTHFPPEPGPAEKQEDTVYPAQMPRACYLVLGPGMGWQLVAVQLGLRLLLLLLSPHTPTHGLRSLATRTLQALTPLL</sequence>
<keyword id="KW-0002">3D-structure</keyword>
<keyword id="KW-0025">Alternative splicing</keyword>
<keyword id="KW-0966">Cell projection</keyword>
<keyword id="KW-0970">Cilium biogenesis/degradation</keyword>
<keyword id="KW-0963">Cytoplasm</keyword>
<keyword id="KW-0206">Cytoskeleton</keyword>
<keyword id="KW-0217">Developmental protein</keyword>
<keyword id="KW-0653">Protein transport</keyword>
<keyword id="KW-1185">Reference proteome</keyword>
<keyword id="KW-0813">Transport</keyword>
<gene>
    <name type="primary">Fuz</name>
</gene>
<dbReference type="EMBL" id="AK011195">
    <property type="protein sequence ID" value="BAB27459.1"/>
    <property type="molecule type" value="mRNA"/>
</dbReference>
<dbReference type="EMBL" id="AK134650">
    <property type="protein sequence ID" value="BAE22226.1"/>
    <property type="molecule type" value="mRNA"/>
</dbReference>
<dbReference type="EMBL" id="BC045601">
    <property type="protein sequence ID" value="AAH45601.1"/>
    <property type="molecule type" value="mRNA"/>
</dbReference>
<dbReference type="CCDS" id="CCDS52237.1">
    <molecule id="Q3UYI6-1"/>
</dbReference>
<dbReference type="RefSeq" id="NP_001390385.1">
    <molecule id="Q3UYI6-2"/>
    <property type="nucleotide sequence ID" value="NM_001403456.1"/>
</dbReference>
<dbReference type="RefSeq" id="NP_081652.2">
    <property type="nucleotide sequence ID" value="NM_027376.3"/>
</dbReference>
<dbReference type="PDB" id="7Q3E">
    <property type="method" value="EM"/>
    <property type="resolution" value="3.35 A"/>
    <property type="chains" value="C=2-415"/>
</dbReference>
<dbReference type="PDBsum" id="7Q3E"/>
<dbReference type="SMR" id="Q3UYI6"/>
<dbReference type="ComplexPortal" id="CPX-5026">
    <property type="entry name" value="CPLANE complex"/>
</dbReference>
<dbReference type="CORUM" id="Q3UYI6"/>
<dbReference type="FunCoup" id="Q3UYI6">
    <property type="interactions" value="307"/>
</dbReference>
<dbReference type="STRING" id="10090.ENSMUSP00000071194"/>
<dbReference type="PhosphoSitePlus" id="Q3UYI6"/>
<dbReference type="jPOST" id="Q3UYI6"/>
<dbReference type="PaxDb" id="10090-ENSMUSP00000071194"/>
<dbReference type="ProteomicsDB" id="273392">
    <molecule id="Q3UYI6-1"/>
</dbReference>
<dbReference type="Antibodypedia" id="49155">
    <property type="antibodies" value="99 antibodies from 21 providers"/>
</dbReference>
<dbReference type="Ensembl" id="ENSMUST00000209132.2">
    <molecule id="Q3UYI6-2"/>
    <property type="protein sequence ID" value="ENSMUSP00000146434.2"/>
    <property type="gene ID" value="ENSMUSG00000011658.17"/>
</dbReference>
<dbReference type="GeneID" id="70300"/>
<dbReference type="KEGG" id="mmu:70300"/>
<dbReference type="AGR" id="MGI:1917550"/>
<dbReference type="CTD" id="80199"/>
<dbReference type="MGI" id="MGI:1917550">
    <property type="gene designation" value="Fuz"/>
</dbReference>
<dbReference type="VEuPathDB" id="HostDB:ENSMUSG00000011658"/>
<dbReference type="eggNOG" id="ENOG502QVMY">
    <property type="taxonomic scope" value="Eukaryota"/>
</dbReference>
<dbReference type="GeneTree" id="ENSGT00390000010727"/>
<dbReference type="HOGENOM" id="CLU_1708347_0_0_1"/>
<dbReference type="InParanoid" id="Q3UYI6"/>
<dbReference type="OrthoDB" id="74835at2759"/>
<dbReference type="PhylomeDB" id="Q3UYI6"/>
<dbReference type="Reactome" id="R-MMU-5610787">
    <property type="pathway name" value="Hedgehog 'off' state"/>
</dbReference>
<dbReference type="BioGRID-ORCS" id="70300">
    <property type="hits" value="3 hits in 77 CRISPR screens"/>
</dbReference>
<dbReference type="PRO" id="PR:Q3UYI6"/>
<dbReference type="Proteomes" id="UP000000589">
    <property type="component" value="Chromosome 7"/>
</dbReference>
<dbReference type="RNAct" id="Q3UYI6">
    <property type="molecule type" value="protein"/>
</dbReference>
<dbReference type="Bgee" id="ENSMUSG00000011658">
    <property type="expression patterns" value="Expressed in interventricular septum and 88 other cell types or tissues"/>
</dbReference>
<dbReference type="ExpressionAtlas" id="Q3UYI6">
    <property type="expression patterns" value="baseline and differential"/>
</dbReference>
<dbReference type="GO" id="GO:0005929">
    <property type="term" value="C:cilium"/>
    <property type="evidence" value="ECO:0000303"/>
    <property type="project" value="ComplexPortal"/>
</dbReference>
<dbReference type="GO" id="GO:0005737">
    <property type="term" value="C:cytoplasm"/>
    <property type="evidence" value="ECO:0007669"/>
    <property type="project" value="UniProtKB-SubCell"/>
</dbReference>
<dbReference type="GO" id="GO:0005856">
    <property type="term" value="C:cytoskeleton"/>
    <property type="evidence" value="ECO:0007669"/>
    <property type="project" value="UniProtKB-SubCell"/>
</dbReference>
<dbReference type="GO" id="GO:0035091">
    <property type="term" value="F:phosphatidylinositol binding"/>
    <property type="evidence" value="ECO:0000314"/>
    <property type="project" value="UniProtKB"/>
</dbReference>
<dbReference type="GO" id="GO:0009952">
    <property type="term" value="P:anterior/posterior pattern specification"/>
    <property type="evidence" value="ECO:0000315"/>
    <property type="project" value="MGI"/>
</dbReference>
<dbReference type="GO" id="GO:0035904">
    <property type="term" value="P:aorta development"/>
    <property type="evidence" value="ECO:0000315"/>
    <property type="project" value="MGI"/>
</dbReference>
<dbReference type="GO" id="GO:0003279">
    <property type="term" value="P:cardiac septum development"/>
    <property type="evidence" value="ECO:0000315"/>
    <property type="project" value="MGI"/>
</dbReference>
<dbReference type="GO" id="GO:0060271">
    <property type="term" value="P:cilium assembly"/>
    <property type="evidence" value="ECO:0000315"/>
    <property type="project" value="UniProtKB"/>
</dbReference>
<dbReference type="GO" id="GO:0060976">
    <property type="term" value="P:coronary vasculature development"/>
    <property type="evidence" value="ECO:0000315"/>
    <property type="project" value="MGI"/>
</dbReference>
<dbReference type="GO" id="GO:0010172">
    <property type="term" value="P:embryonic body morphogenesis"/>
    <property type="evidence" value="ECO:0000315"/>
    <property type="project" value="UniProtKB"/>
</dbReference>
<dbReference type="GO" id="GO:0042733">
    <property type="term" value="P:embryonic digit morphogenesis"/>
    <property type="evidence" value="ECO:0000315"/>
    <property type="project" value="MGI"/>
</dbReference>
<dbReference type="GO" id="GO:0048702">
    <property type="term" value="P:embryonic neurocranium morphogenesis"/>
    <property type="evidence" value="ECO:0000315"/>
    <property type="project" value="MGI"/>
</dbReference>
<dbReference type="GO" id="GO:0048704">
    <property type="term" value="P:embryonic skeletal system morphogenesis"/>
    <property type="evidence" value="ECO:0000315"/>
    <property type="project" value="UniProtKB"/>
</dbReference>
<dbReference type="GO" id="GO:0001736">
    <property type="term" value="P:establishment of planar polarity"/>
    <property type="evidence" value="ECO:0000315"/>
    <property type="project" value="UniProtKB"/>
</dbReference>
<dbReference type="GO" id="GO:0001942">
    <property type="term" value="P:hair follicle development"/>
    <property type="evidence" value="ECO:0000315"/>
    <property type="project" value="UniProtKB"/>
</dbReference>
<dbReference type="GO" id="GO:0042073">
    <property type="term" value="P:intraciliary transport"/>
    <property type="evidence" value="ECO:0000303"/>
    <property type="project" value="ComplexPortal"/>
</dbReference>
<dbReference type="GO" id="GO:0120223">
    <property type="term" value="P:larynx morphogenesis"/>
    <property type="evidence" value="ECO:0000315"/>
    <property type="project" value="MGI"/>
</dbReference>
<dbReference type="GO" id="GO:0090090">
    <property type="term" value="P:negative regulation of canonical Wnt signaling pathway"/>
    <property type="evidence" value="ECO:0000315"/>
    <property type="project" value="UniProtKB"/>
</dbReference>
<dbReference type="GO" id="GO:0030336">
    <property type="term" value="P:negative regulation of cell migration"/>
    <property type="evidence" value="ECO:0000250"/>
    <property type="project" value="UniProtKB"/>
</dbReference>
<dbReference type="GO" id="GO:0008285">
    <property type="term" value="P:negative regulation of cell population proliferation"/>
    <property type="evidence" value="ECO:0000315"/>
    <property type="project" value="UniProtKB"/>
</dbReference>
<dbReference type="GO" id="GO:2000314">
    <property type="term" value="P:negative regulation of fibroblast growth factor receptor signaling pathway involved in neural plate anterior/posterior pattern formation"/>
    <property type="evidence" value="ECO:0000315"/>
    <property type="project" value="UniProtKB"/>
</dbReference>
<dbReference type="GO" id="GO:0090301">
    <property type="term" value="P:negative regulation of neural crest formation"/>
    <property type="evidence" value="ECO:0000315"/>
    <property type="project" value="UniProtKB"/>
</dbReference>
<dbReference type="GO" id="GO:0001843">
    <property type="term" value="P:neural tube closure"/>
    <property type="evidence" value="ECO:0000315"/>
    <property type="project" value="UniProtKB"/>
</dbReference>
<dbReference type="GO" id="GO:0021915">
    <property type="term" value="P:neural tube development"/>
    <property type="evidence" value="ECO:0000303"/>
    <property type="project" value="ComplexPortal"/>
</dbReference>
<dbReference type="GO" id="GO:1905515">
    <property type="term" value="P:non-motile cilium assembly"/>
    <property type="evidence" value="ECO:0000315"/>
    <property type="project" value="UniProtKB"/>
</dbReference>
<dbReference type="GO" id="GO:0045724">
    <property type="term" value="P:positive regulation of cilium assembly"/>
    <property type="evidence" value="ECO:0000315"/>
    <property type="project" value="UniProtKB"/>
</dbReference>
<dbReference type="GO" id="GO:0010954">
    <property type="term" value="P:positive regulation of protein processing"/>
    <property type="evidence" value="ECO:0000315"/>
    <property type="project" value="MGI"/>
</dbReference>
<dbReference type="GO" id="GO:0015031">
    <property type="term" value="P:protein transport"/>
    <property type="evidence" value="ECO:0007669"/>
    <property type="project" value="UniProtKB-KW"/>
</dbReference>
<dbReference type="GO" id="GO:1902017">
    <property type="term" value="P:regulation of cilium assembly"/>
    <property type="evidence" value="ECO:0000303"/>
    <property type="project" value="ComplexPortal"/>
</dbReference>
<dbReference type="GO" id="GO:0008589">
    <property type="term" value="P:regulation of smoothened signaling pathway"/>
    <property type="evidence" value="ECO:0000315"/>
    <property type="project" value="UniProtKB"/>
</dbReference>
<dbReference type="GO" id="GO:0060021">
    <property type="term" value="P:roof of mouth development"/>
    <property type="evidence" value="ECO:0000315"/>
    <property type="project" value="MGI"/>
</dbReference>
<dbReference type="GO" id="GO:0021510">
    <property type="term" value="P:spinal cord development"/>
    <property type="evidence" value="ECO:0000315"/>
    <property type="project" value="MGI"/>
</dbReference>
<dbReference type="GO" id="GO:0021513">
    <property type="term" value="P:spinal cord dorsal/ventral patterning"/>
    <property type="evidence" value="ECO:0000315"/>
    <property type="project" value="MGI"/>
</dbReference>
<dbReference type="GO" id="GO:0043587">
    <property type="term" value="P:tongue morphogenesis"/>
    <property type="evidence" value="ECO:0000315"/>
    <property type="project" value="MGI"/>
</dbReference>
<dbReference type="GO" id="GO:0016192">
    <property type="term" value="P:vesicle-mediated transport"/>
    <property type="evidence" value="ECO:0007669"/>
    <property type="project" value="InterPro"/>
</dbReference>
<dbReference type="CDD" id="cd21091">
    <property type="entry name" value="Fuzzy"/>
    <property type="match status" value="1"/>
</dbReference>
<dbReference type="InterPro" id="IPR043972">
    <property type="entry name" value="FUZ/MON1/HPS1_longin_1"/>
</dbReference>
<dbReference type="InterPro" id="IPR043971">
    <property type="entry name" value="FUZ/MON1/HPS1_longin_2"/>
</dbReference>
<dbReference type="InterPro" id="IPR043970">
    <property type="entry name" value="FUZ/MON1/HPS1_longin_3"/>
</dbReference>
<dbReference type="InterPro" id="IPR026069">
    <property type="entry name" value="Fuzzy"/>
</dbReference>
<dbReference type="PANTHER" id="PTHR13559">
    <property type="entry name" value="INTRACELLULAR TRAFFIC PROTEIN-RELATED"/>
    <property type="match status" value="1"/>
</dbReference>
<dbReference type="PANTHER" id="PTHR13559:SF1">
    <property type="entry name" value="PROTEIN FUZZY HOMOLOG"/>
    <property type="match status" value="1"/>
</dbReference>
<dbReference type="Pfam" id="PF19036">
    <property type="entry name" value="Fuz_longin_1"/>
    <property type="match status" value="1"/>
</dbReference>
<dbReference type="Pfam" id="PF19037">
    <property type="entry name" value="Fuz_longin_2"/>
    <property type="match status" value="1"/>
</dbReference>
<dbReference type="Pfam" id="PF19038">
    <property type="entry name" value="Fuz_longin_3"/>
    <property type="match status" value="1"/>
</dbReference>
<proteinExistence type="evidence at protein level"/>
<comment type="function">
    <text evidence="2 3 4 6 10">Probable planar cell polarity effector involved in cilium biogenesis. May regulate protein and membrane transport to the cilium. Proposed to function as core component of the CPLANE (ciliogenesis and planar polarity effectors) complex involved in the recruitment of peripheral IFT-A proteins to basal bodies (PubMed:19767740, PubMed:19877275, PubMed:27158779). May regulate the morphogenesis of hair follicles which depends on functional primary cilia (PubMed:20962855). Binds phosphatidylinositol 3-phosphate with highest affinity, followed by phosphatidylinositol 4-phosphate and phosphatidylinositol 5-phosphate (PubMed:35427153).</text>
</comment>
<comment type="subunit">
    <text evidence="5 6">Component of the CPLANE (ciliogenesis and planar polarity effectors) complex, composed of INTU, FUZ and WDPCP (PubMed:27158779, PubMed:35427153). Interacts with CPLANE1 (PubMed:27158779). Interacts with CPLANE2 (PubMed:35427153).</text>
</comment>
<comment type="subcellular location">
    <subcellularLocation>
        <location evidence="1">Cytoplasm</location>
    </subcellularLocation>
    <subcellularLocation>
        <location evidence="1">Cytoplasm</location>
        <location evidence="1">Cytoskeleton</location>
    </subcellularLocation>
    <subcellularLocation>
        <location evidence="9">Cytoplasm</location>
        <location evidence="9">Cytoskeleton</location>
        <location evidence="9">Cilium basal body</location>
    </subcellularLocation>
</comment>
<comment type="alternative products">
    <event type="alternative splicing"/>
    <isoform>
        <id>Q3UYI6-1</id>
        <name>1</name>
        <sequence type="displayed"/>
    </isoform>
    <isoform>
        <id>Q3UYI6-2</id>
        <name>2</name>
        <sequence type="described" ref="VSP_029967 VSP_029968"/>
    </isoform>
</comment>
<comment type="tissue specificity">
    <text evidence="4">Expressed in dermal and epidermal cells.</text>
</comment>
<comment type="disruption phenotype">
    <text evidence="2 3 5">Embryonically lethal. Embryos display severe developmental defects, including neural tube closure defects, abnormal patterning of the spinal cord and the limb buds. They display polydactyly on all limbs and defects in skeletal development and organogenesis, including malformed sternum, ribs and long bones, as well as severely hypoplastic lungs and conotruncal defects. The number of hair follicles is also reduced. Defects in ciliogenesis are clearly noticed and result in abnormal hedgehog/smoothened signaling.</text>
</comment>
<comment type="similarity">
    <text evidence="9">Belongs to the fuzzy family.</text>
</comment>
<accession>Q3UYI6</accession>
<accession>Q9D0P9</accession>
<reference key="1">
    <citation type="journal article" date="2005" name="Science">
        <title>The transcriptional landscape of the mammalian genome.</title>
        <authorList>
            <person name="Carninci P."/>
            <person name="Kasukawa T."/>
            <person name="Katayama S."/>
            <person name="Gough J."/>
            <person name="Frith M.C."/>
            <person name="Maeda N."/>
            <person name="Oyama R."/>
            <person name="Ravasi T."/>
            <person name="Lenhard B."/>
            <person name="Wells C."/>
            <person name="Kodzius R."/>
            <person name="Shimokawa K."/>
            <person name="Bajic V.B."/>
            <person name="Brenner S.E."/>
            <person name="Batalov S."/>
            <person name="Forrest A.R."/>
            <person name="Zavolan M."/>
            <person name="Davis M.J."/>
            <person name="Wilming L.G."/>
            <person name="Aidinis V."/>
            <person name="Allen J.E."/>
            <person name="Ambesi-Impiombato A."/>
            <person name="Apweiler R."/>
            <person name="Aturaliya R.N."/>
            <person name="Bailey T.L."/>
            <person name="Bansal M."/>
            <person name="Baxter L."/>
            <person name="Beisel K.W."/>
            <person name="Bersano T."/>
            <person name="Bono H."/>
            <person name="Chalk A.M."/>
            <person name="Chiu K.P."/>
            <person name="Choudhary V."/>
            <person name="Christoffels A."/>
            <person name="Clutterbuck D.R."/>
            <person name="Crowe M.L."/>
            <person name="Dalla E."/>
            <person name="Dalrymple B.P."/>
            <person name="de Bono B."/>
            <person name="Della Gatta G."/>
            <person name="di Bernardo D."/>
            <person name="Down T."/>
            <person name="Engstrom P."/>
            <person name="Fagiolini M."/>
            <person name="Faulkner G."/>
            <person name="Fletcher C.F."/>
            <person name="Fukushima T."/>
            <person name="Furuno M."/>
            <person name="Futaki S."/>
            <person name="Gariboldi M."/>
            <person name="Georgii-Hemming P."/>
            <person name="Gingeras T.R."/>
            <person name="Gojobori T."/>
            <person name="Green R.E."/>
            <person name="Gustincich S."/>
            <person name="Harbers M."/>
            <person name="Hayashi Y."/>
            <person name="Hensch T.K."/>
            <person name="Hirokawa N."/>
            <person name="Hill D."/>
            <person name="Huminiecki L."/>
            <person name="Iacono M."/>
            <person name="Ikeo K."/>
            <person name="Iwama A."/>
            <person name="Ishikawa T."/>
            <person name="Jakt M."/>
            <person name="Kanapin A."/>
            <person name="Katoh M."/>
            <person name="Kawasawa Y."/>
            <person name="Kelso J."/>
            <person name="Kitamura H."/>
            <person name="Kitano H."/>
            <person name="Kollias G."/>
            <person name="Krishnan S.P."/>
            <person name="Kruger A."/>
            <person name="Kummerfeld S.K."/>
            <person name="Kurochkin I.V."/>
            <person name="Lareau L.F."/>
            <person name="Lazarevic D."/>
            <person name="Lipovich L."/>
            <person name="Liu J."/>
            <person name="Liuni S."/>
            <person name="McWilliam S."/>
            <person name="Madan Babu M."/>
            <person name="Madera M."/>
            <person name="Marchionni L."/>
            <person name="Matsuda H."/>
            <person name="Matsuzawa S."/>
            <person name="Miki H."/>
            <person name="Mignone F."/>
            <person name="Miyake S."/>
            <person name="Morris K."/>
            <person name="Mottagui-Tabar S."/>
            <person name="Mulder N."/>
            <person name="Nakano N."/>
            <person name="Nakauchi H."/>
            <person name="Ng P."/>
            <person name="Nilsson R."/>
            <person name="Nishiguchi S."/>
            <person name="Nishikawa S."/>
            <person name="Nori F."/>
            <person name="Ohara O."/>
            <person name="Okazaki Y."/>
            <person name="Orlando V."/>
            <person name="Pang K.C."/>
            <person name="Pavan W.J."/>
            <person name="Pavesi G."/>
            <person name="Pesole G."/>
            <person name="Petrovsky N."/>
            <person name="Piazza S."/>
            <person name="Reed J."/>
            <person name="Reid J.F."/>
            <person name="Ring B.Z."/>
            <person name="Ringwald M."/>
            <person name="Rost B."/>
            <person name="Ruan Y."/>
            <person name="Salzberg S.L."/>
            <person name="Sandelin A."/>
            <person name="Schneider C."/>
            <person name="Schoenbach C."/>
            <person name="Sekiguchi K."/>
            <person name="Semple C.A."/>
            <person name="Seno S."/>
            <person name="Sessa L."/>
            <person name="Sheng Y."/>
            <person name="Shibata Y."/>
            <person name="Shimada H."/>
            <person name="Shimada K."/>
            <person name="Silva D."/>
            <person name="Sinclair B."/>
            <person name="Sperling S."/>
            <person name="Stupka E."/>
            <person name="Sugiura K."/>
            <person name="Sultana R."/>
            <person name="Takenaka Y."/>
            <person name="Taki K."/>
            <person name="Tammoja K."/>
            <person name="Tan S.L."/>
            <person name="Tang S."/>
            <person name="Taylor M.S."/>
            <person name="Tegner J."/>
            <person name="Teichmann S.A."/>
            <person name="Ueda H.R."/>
            <person name="van Nimwegen E."/>
            <person name="Verardo R."/>
            <person name="Wei C.L."/>
            <person name="Yagi K."/>
            <person name="Yamanishi H."/>
            <person name="Zabarovsky E."/>
            <person name="Zhu S."/>
            <person name="Zimmer A."/>
            <person name="Hide W."/>
            <person name="Bult C."/>
            <person name="Grimmond S.M."/>
            <person name="Teasdale R.D."/>
            <person name="Liu E.T."/>
            <person name="Brusic V."/>
            <person name="Quackenbush J."/>
            <person name="Wahlestedt C."/>
            <person name="Mattick J.S."/>
            <person name="Hume D.A."/>
            <person name="Kai C."/>
            <person name="Sasaki D."/>
            <person name="Tomaru Y."/>
            <person name="Fukuda S."/>
            <person name="Kanamori-Katayama M."/>
            <person name="Suzuki M."/>
            <person name="Aoki J."/>
            <person name="Arakawa T."/>
            <person name="Iida J."/>
            <person name="Imamura K."/>
            <person name="Itoh M."/>
            <person name="Kato T."/>
            <person name="Kawaji H."/>
            <person name="Kawagashira N."/>
            <person name="Kawashima T."/>
            <person name="Kojima M."/>
            <person name="Kondo S."/>
            <person name="Konno H."/>
            <person name="Nakano K."/>
            <person name="Ninomiya N."/>
            <person name="Nishio T."/>
            <person name="Okada M."/>
            <person name="Plessy C."/>
            <person name="Shibata K."/>
            <person name="Shiraki T."/>
            <person name="Suzuki S."/>
            <person name="Tagami M."/>
            <person name="Waki K."/>
            <person name="Watahiki A."/>
            <person name="Okamura-Oho Y."/>
            <person name="Suzuki H."/>
            <person name="Kawai J."/>
            <person name="Hayashizaki Y."/>
        </authorList>
    </citation>
    <scope>NUCLEOTIDE SEQUENCE [LARGE SCALE MRNA] (ISOFORMS 1 AND 2)</scope>
    <source>
        <strain>C57BL/6J</strain>
        <tissue>Medulla oblongata</tissue>
    </source>
</reference>
<reference key="2">
    <citation type="journal article" date="2004" name="Genome Res.">
        <title>The status, quality, and expansion of the NIH full-length cDNA project: the Mammalian Gene Collection (MGC).</title>
        <authorList>
            <consortium name="The MGC Project Team"/>
        </authorList>
    </citation>
    <scope>NUCLEOTIDE SEQUENCE [LARGE SCALE MRNA] (ISOFORM 2)</scope>
    <source>
        <tissue>Eye</tissue>
    </source>
</reference>
<reference key="3">
    <citation type="journal article" date="2009" name="Dev. Dyn.">
        <title>Planar cell polarity effector gene Fuzzy regulates cilia formation and Hedgehog signal transduction in mouse.</title>
        <authorList>
            <person name="Heydeck W."/>
            <person name="Zeng H."/>
            <person name="Liu A."/>
        </authorList>
    </citation>
    <scope>FUNCTION</scope>
    <scope>DISRUPTION PHENOTYPE</scope>
</reference>
<reference key="4">
    <citation type="journal article" date="2009" name="Nat. Cell Biol.">
        <title>The planar cell polarity effector Fuz is essential for targeted membrane trafficking, ciliogenesis and mouse embryonic development.</title>
        <authorList>
            <person name="Gray R.S."/>
            <person name="Abitua P.B."/>
            <person name="Wlodarczyk B.J."/>
            <person name="Szabo-Rogers H.L."/>
            <person name="Blanchard O."/>
            <person name="Lee I."/>
            <person name="Weiss G.S."/>
            <person name="Liu K.J."/>
            <person name="Marcotte E.M."/>
            <person name="Wallingford J.B."/>
            <person name="Finnell R.H."/>
        </authorList>
    </citation>
    <scope>FUNCTION</scope>
    <scope>DISRUPTION PHENOTYPE</scope>
</reference>
<reference key="5">
    <citation type="journal article" date="2011" name="J. Invest. Dermatol.">
        <title>Fuz controls the morphogenesis and differentiation of hair follicles through the formation of primary cilia.</title>
        <authorList>
            <person name="Dai D."/>
            <person name="Zhu H."/>
            <person name="Wlodarczyk B."/>
            <person name="Zhang L."/>
            <person name="Li L."/>
            <person name="Li A.G."/>
            <person name="Finnell R.H."/>
            <person name="Roop D.R."/>
            <person name="Chen J."/>
        </authorList>
    </citation>
    <scope>FUNCTION</scope>
    <scope>TISSUE SPECIFICITY</scope>
</reference>
<reference key="6">
    <citation type="journal article" date="2016" name="Nat. Genet.">
        <title>The ciliopathy-associated CPLANE proteins direct basal body recruitment of intraflagellar transport machinery.</title>
        <authorList>
            <person name="Toriyama M."/>
            <person name="Lee C."/>
            <person name="Taylor S.P."/>
            <person name="Duran I."/>
            <person name="Cohn D.H."/>
            <person name="Bruel A.L."/>
            <person name="Tabler J.M."/>
            <person name="Drew K."/>
            <person name="Kelly M.R."/>
            <person name="Kim S."/>
            <person name="Park T.J."/>
            <person name="Braun D.A."/>
            <person name="Pierquin G."/>
            <person name="Biver A."/>
            <person name="Wagner K."/>
            <person name="Malfroot A."/>
            <person name="Panigrahi I."/>
            <person name="Franco B."/>
            <person name="Al-Lami H.A."/>
            <person name="Yeung Y."/>
            <person name="Choi Y.J."/>
            <person name="Duffourd Y."/>
            <person name="Faivre L."/>
            <person name="Riviere J.B."/>
            <person name="Chen J."/>
            <person name="Liu K.J."/>
            <person name="Marcotte E.M."/>
            <person name="Hildebrandt F."/>
            <person name="Thauvin-Robinet C."/>
            <person name="Krakow D."/>
            <person name="Jackson P.K."/>
            <person name="Wallingford J.B."/>
        </authorList>
    </citation>
    <scope>INTERACTION WITH CPLANE1</scope>
    <scope>SUBUNIT</scope>
    <scope>FUNCTION</scope>
    <scope>DISRUPTION PHENOTYPE</scope>
</reference>
<reference evidence="11" key="7">
    <citation type="journal article" date="2022" name="Sci. Adv.">
        <title>Structure of the ciliogenesis-associated CPLANE complex.</title>
        <authorList>
            <person name="Langousis G."/>
            <person name="Cavadini S."/>
            <person name="Boegholm N."/>
            <person name="Lorentzen E."/>
            <person name="Kempf G."/>
            <person name="Matthias P."/>
        </authorList>
    </citation>
    <scope>STRUCTURE BY ELECTRON MICROSCOPY (3.35 ANGSTROMS) OF 2-415</scope>
    <scope>IDENTIFICATION IN THE CPLANE COMPLEX</scope>
    <scope>INTERACTION WITH CPLANE2</scope>
    <scope>FUNCTION</scope>
</reference>
<evidence type="ECO:0000250" key="1">
    <source>
        <dbReference type="UniProtKB" id="Q2HZX7"/>
    </source>
</evidence>
<evidence type="ECO:0000269" key="2">
    <source>
    </source>
</evidence>
<evidence type="ECO:0000269" key="3">
    <source>
    </source>
</evidence>
<evidence type="ECO:0000269" key="4">
    <source>
    </source>
</evidence>
<evidence type="ECO:0000269" key="5">
    <source>
    </source>
</evidence>
<evidence type="ECO:0000269" key="6">
    <source>
    </source>
</evidence>
<evidence type="ECO:0000303" key="7">
    <source>
    </source>
</evidence>
<evidence type="ECO:0000303" key="8">
    <source>
    </source>
</evidence>
<evidence type="ECO:0000305" key="9"/>
<evidence type="ECO:0000305" key="10">
    <source>
    </source>
</evidence>
<evidence type="ECO:0007744" key="11">
    <source>
        <dbReference type="PDB" id="7Q3E"/>
    </source>
</evidence>
<evidence type="ECO:0007829" key="12">
    <source>
        <dbReference type="PDB" id="7Q3E"/>
    </source>
</evidence>
<name>FUZZY_MOUSE</name>
<protein>
    <recommendedName>
        <fullName>Protein fuzzy homolog</fullName>
    </recommendedName>
</protein>
<organism>
    <name type="scientific">Mus musculus</name>
    <name type="common">Mouse</name>
    <dbReference type="NCBI Taxonomy" id="10090"/>
    <lineage>
        <taxon>Eukaryota</taxon>
        <taxon>Metazoa</taxon>
        <taxon>Chordata</taxon>
        <taxon>Craniata</taxon>
        <taxon>Vertebrata</taxon>
        <taxon>Euteleostomi</taxon>
        <taxon>Mammalia</taxon>
        <taxon>Eutheria</taxon>
        <taxon>Euarchontoglires</taxon>
        <taxon>Glires</taxon>
        <taxon>Rodentia</taxon>
        <taxon>Myomorpha</taxon>
        <taxon>Muroidea</taxon>
        <taxon>Muridae</taxon>
        <taxon>Murinae</taxon>
        <taxon>Mus</taxon>
        <taxon>Mus</taxon>
    </lineage>
</organism>